<organism>
    <name type="scientific">Actinobacillus pleuropneumoniae</name>
    <name type="common">Haemophilus pleuropneumoniae</name>
    <dbReference type="NCBI Taxonomy" id="715"/>
    <lineage>
        <taxon>Bacteria</taxon>
        <taxon>Pseudomonadati</taxon>
        <taxon>Pseudomonadota</taxon>
        <taxon>Gammaproteobacteria</taxon>
        <taxon>Pasteurellales</taxon>
        <taxon>Pasteurellaceae</taxon>
        <taxon>Actinobacillus</taxon>
    </lineage>
</organism>
<proteinExistence type="inferred from homology"/>
<feature type="chain" id="PRO_0000146163" description="Small ribosomal subunit protein uS12">
    <location>
        <begin position="1" status="less than"/>
        <end position="82" status="greater than"/>
    </location>
</feature>
<feature type="modified residue" description="3-methylthioaspartic acid" evidence="1">
    <location>
        <position position="59"/>
    </location>
</feature>
<feature type="non-terminal residue">
    <location>
        <position position="1"/>
    </location>
</feature>
<feature type="non-terminal residue">
    <location>
        <position position="82"/>
    </location>
</feature>
<comment type="function">
    <text evidence="1">With S4 and S5 plays an important role in translational accuracy.</text>
</comment>
<comment type="function">
    <text evidence="1">Interacts with and stabilizes bases of the 16S rRNA that are involved in tRNA selection in the A site and with the mRNA backbone. Located at the interface of the 30S and 50S subunits, it traverses the body of the 30S subunit contacting proteins on the other side and probably holding the rRNA structure together. The combined cluster of proteins S8, S12 and S17 appears to hold together the shoulder and platform of the 30S subunit (By similarity).</text>
</comment>
<comment type="subunit">
    <text evidence="1">Part of the 30S ribosomal subunit. Contacts proteins S8 and S17. May interact with IF1 in the 30S initiation complex (By similarity).</text>
</comment>
<comment type="similarity">
    <text evidence="2">Belongs to the universal ribosomal protein uS12 family.</text>
</comment>
<protein>
    <recommendedName>
        <fullName evidence="2">Small ribosomal subunit protein uS12</fullName>
    </recommendedName>
    <alternativeName>
        <fullName>30S ribosomal protein S12</fullName>
    </alternativeName>
</protein>
<evidence type="ECO:0000250" key="1"/>
<evidence type="ECO:0000305" key="2"/>
<keyword id="KW-0488">Methylation</keyword>
<keyword id="KW-0687">Ribonucleoprotein</keyword>
<keyword id="KW-0689">Ribosomal protein</keyword>
<keyword id="KW-0694">RNA-binding</keyword>
<keyword id="KW-0699">rRNA-binding</keyword>
<keyword id="KW-0820">tRNA-binding</keyword>
<name>RS12_ACTPL</name>
<sequence length="82" mass="9077">RGVCTRVYTTTPKKPNSALXKVCRIRLTNGFEVTSYIGGEGHNLQEHSVVLIRGGRVKDLPGVRYHTVRGALDCASVKDRKQ</sequence>
<accession>O31194</accession>
<reference key="1">
    <citation type="submission" date="1997-11" db="EMBL/GenBank/DDBJ databases">
        <authorList>
            <person name="Bacmeister C.X."/>
            <person name="Fenwick B.W."/>
        </authorList>
    </citation>
    <scope>NUCLEOTIDE SEQUENCE [GENOMIC DNA]</scope>
    <source>
        <strain>ATCC 27088 / DSM 13472 / CCM 5869 / S4074 / Serotype 1</strain>
    </source>
</reference>
<gene>
    <name type="primary">rpsL</name>
</gene>
<dbReference type="EMBL" id="AF032868">
    <property type="protein sequence ID" value="AAB87465.1"/>
    <property type="molecule type" value="Genomic_DNA"/>
</dbReference>
<dbReference type="GO" id="GO:0015935">
    <property type="term" value="C:small ribosomal subunit"/>
    <property type="evidence" value="ECO:0007669"/>
    <property type="project" value="InterPro"/>
</dbReference>
<dbReference type="GO" id="GO:0019843">
    <property type="term" value="F:rRNA binding"/>
    <property type="evidence" value="ECO:0007669"/>
    <property type="project" value="UniProtKB-KW"/>
</dbReference>
<dbReference type="GO" id="GO:0003735">
    <property type="term" value="F:structural constituent of ribosome"/>
    <property type="evidence" value="ECO:0007669"/>
    <property type="project" value="InterPro"/>
</dbReference>
<dbReference type="GO" id="GO:0000049">
    <property type="term" value="F:tRNA binding"/>
    <property type="evidence" value="ECO:0007669"/>
    <property type="project" value="UniProtKB-KW"/>
</dbReference>
<dbReference type="GO" id="GO:0006412">
    <property type="term" value="P:translation"/>
    <property type="evidence" value="ECO:0007669"/>
    <property type="project" value="InterPro"/>
</dbReference>
<dbReference type="CDD" id="cd03368">
    <property type="entry name" value="Ribosomal_S12"/>
    <property type="match status" value="1"/>
</dbReference>
<dbReference type="Gene3D" id="2.40.50.140">
    <property type="entry name" value="Nucleic acid-binding proteins"/>
    <property type="match status" value="1"/>
</dbReference>
<dbReference type="InterPro" id="IPR012340">
    <property type="entry name" value="NA-bd_OB-fold"/>
</dbReference>
<dbReference type="InterPro" id="IPR006032">
    <property type="entry name" value="Ribosomal_uS12"/>
</dbReference>
<dbReference type="InterPro" id="IPR005679">
    <property type="entry name" value="Ribosomal_uS12_bac"/>
</dbReference>
<dbReference type="NCBIfam" id="TIGR00981">
    <property type="entry name" value="rpsL_bact"/>
    <property type="match status" value="1"/>
</dbReference>
<dbReference type="PANTHER" id="PTHR11652">
    <property type="entry name" value="30S RIBOSOMAL PROTEIN S12 FAMILY MEMBER"/>
    <property type="match status" value="1"/>
</dbReference>
<dbReference type="Pfam" id="PF00164">
    <property type="entry name" value="Ribosom_S12_S23"/>
    <property type="match status" value="1"/>
</dbReference>
<dbReference type="PIRSF" id="PIRSF002133">
    <property type="entry name" value="Ribosomal_S12/S23"/>
    <property type="match status" value="1"/>
</dbReference>
<dbReference type="PRINTS" id="PR01034">
    <property type="entry name" value="RIBOSOMALS12"/>
</dbReference>
<dbReference type="SUPFAM" id="SSF50249">
    <property type="entry name" value="Nucleic acid-binding proteins"/>
    <property type="match status" value="1"/>
</dbReference>
<dbReference type="PROSITE" id="PS00055">
    <property type="entry name" value="RIBOSOMAL_S12"/>
    <property type="match status" value="1"/>
</dbReference>